<accession>A3NR92</accession>
<comment type="function">
    <text evidence="1">Reversibly transfers an adenylyl group from ATP to 4'-phosphopantetheine, yielding dephospho-CoA (dPCoA) and pyrophosphate.</text>
</comment>
<comment type="catalytic activity">
    <reaction evidence="1">
        <text>(R)-4'-phosphopantetheine + ATP + H(+) = 3'-dephospho-CoA + diphosphate</text>
        <dbReference type="Rhea" id="RHEA:19801"/>
        <dbReference type="ChEBI" id="CHEBI:15378"/>
        <dbReference type="ChEBI" id="CHEBI:30616"/>
        <dbReference type="ChEBI" id="CHEBI:33019"/>
        <dbReference type="ChEBI" id="CHEBI:57328"/>
        <dbReference type="ChEBI" id="CHEBI:61723"/>
        <dbReference type="EC" id="2.7.7.3"/>
    </reaction>
</comment>
<comment type="cofactor">
    <cofactor evidence="1">
        <name>Mg(2+)</name>
        <dbReference type="ChEBI" id="CHEBI:18420"/>
    </cofactor>
</comment>
<comment type="pathway">
    <text evidence="1">Cofactor biosynthesis; coenzyme A biosynthesis; CoA from (R)-pantothenate: step 4/5.</text>
</comment>
<comment type="subunit">
    <text evidence="1">Homohexamer.</text>
</comment>
<comment type="subcellular location">
    <subcellularLocation>
        <location evidence="1">Cytoplasm</location>
    </subcellularLocation>
</comment>
<comment type="similarity">
    <text evidence="1">Belongs to the bacterial CoaD family.</text>
</comment>
<name>COAD_BURP0</name>
<protein>
    <recommendedName>
        <fullName evidence="1">Phosphopantetheine adenylyltransferase</fullName>
        <ecNumber evidence="1">2.7.7.3</ecNumber>
    </recommendedName>
    <alternativeName>
        <fullName evidence="1">Dephospho-CoA pyrophosphorylase</fullName>
    </alternativeName>
    <alternativeName>
        <fullName evidence="1">Pantetheine-phosphate adenylyltransferase</fullName>
        <shortName evidence="1">PPAT</shortName>
    </alternativeName>
</protein>
<evidence type="ECO:0000255" key="1">
    <source>
        <dbReference type="HAMAP-Rule" id="MF_00151"/>
    </source>
</evidence>
<proteinExistence type="inferred from homology"/>
<organism>
    <name type="scientific">Burkholderia pseudomallei (strain 1106a)</name>
    <dbReference type="NCBI Taxonomy" id="357348"/>
    <lineage>
        <taxon>Bacteria</taxon>
        <taxon>Pseudomonadati</taxon>
        <taxon>Pseudomonadota</taxon>
        <taxon>Betaproteobacteria</taxon>
        <taxon>Burkholderiales</taxon>
        <taxon>Burkholderiaceae</taxon>
        <taxon>Burkholderia</taxon>
        <taxon>pseudomallei group</taxon>
    </lineage>
</organism>
<keyword id="KW-0067">ATP-binding</keyword>
<keyword id="KW-0173">Coenzyme A biosynthesis</keyword>
<keyword id="KW-0963">Cytoplasm</keyword>
<keyword id="KW-0460">Magnesium</keyword>
<keyword id="KW-0547">Nucleotide-binding</keyword>
<keyword id="KW-0548">Nucleotidyltransferase</keyword>
<keyword id="KW-0808">Transferase</keyword>
<gene>
    <name evidence="1" type="primary">coaD</name>
    <name type="ordered locus">BURPS1106A_0580</name>
</gene>
<dbReference type="EC" id="2.7.7.3" evidence="1"/>
<dbReference type="EMBL" id="CP000572">
    <property type="protein sequence ID" value="ABN90283.1"/>
    <property type="molecule type" value="Genomic_DNA"/>
</dbReference>
<dbReference type="RefSeq" id="WP_004195249.1">
    <property type="nucleotide sequence ID" value="NC_009076.1"/>
</dbReference>
<dbReference type="SMR" id="A3NR92"/>
<dbReference type="GeneID" id="93059037"/>
<dbReference type="KEGG" id="bpl:BURPS1106A_0580"/>
<dbReference type="HOGENOM" id="CLU_100149_0_1_4"/>
<dbReference type="UniPathway" id="UPA00241">
    <property type="reaction ID" value="UER00355"/>
</dbReference>
<dbReference type="Proteomes" id="UP000006738">
    <property type="component" value="Chromosome I"/>
</dbReference>
<dbReference type="GO" id="GO:0005737">
    <property type="term" value="C:cytoplasm"/>
    <property type="evidence" value="ECO:0007669"/>
    <property type="project" value="UniProtKB-SubCell"/>
</dbReference>
<dbReference type="GO" id="GO:0005524">
    <property type="term" value="F:ATP binding"/>
    <property type="evidence" value="ECO:0007669"/>
    <property type="project" value="UniProtKB-KW"/>
</dbReference>
<dbReference type="GO" id="GO:0004595">
    <property type="term" value="F:pantetheine-phosphate adenylyltransferase activity"/>
    <property type="evidence" value="ECO:0007669"/>
    <property type="project" value="UniProtKB-UniRule"/>
</dbReference>
<dbReference type="GO" id="GO:0015937">
    <property type="term" value="P:coenzyme A biosynthetic process"/>
    <property type="evidence" value="ECO:0007669"/>
    <property type="project" value="UniProtKB-UniRule"/>
</dbReference>
<dbReference type="CDD" id="cd02163">
    <property type="entry name" value="PPAT"/>
    <property type="match status" value="1"/>
</dbReference>
<dbReference type="Gene3D" id="3.40.50.620">
    <property type="entry name" value="HUPs"/>
    <property type="match status" value="1"/>
</dbReference>
<dbReference type="HAMAP" id="MF_00151">
    <property type="entry name" value="PPAT_bact"/>
    <property type="match status" value="1"/>
</dbReference>
<dbReference type="InterPro" id="IPR004821">
    <property type="entry name" value="Cyt_trans-like"/>
</dbReference>
<dbReference type="InterPro" id="IPR001980">
    <property type="entry name" value="PPAT"/>
</dbReference>
<dbReference type="InterPro" id="IPR014729">
    <property type="entry name" value="Rossmann-like_a/b/a_fold"/>
</dbReference>
<dbReference type="NCBIfam" id="TIGR01510">
    <property type="entry name" value="coaD_prev_kdtB"/>
    <property type="match status" value="1"/>
</dbReference>
<dbReference type="NCBIfam" id="TIGR00125">
    <property type="entry name" value="cyt_tran_rel"/>
    <property type="match status" value="1"/>
</dbReference>
<dbReference type="PANTHER" id="PTHR21342">
    <property type="entry name" value="PHOSPHOPANTETHEINE ADENYLYLTRANSFERASE"/>
    <property type="match status" value="1"/>
</dbReference>
<dbReference type="PANTHER" id="PTHR21342:SF1">
    <property type="entry name" value="PHOSPHOPANTETHEINE ADENYLYLTRANSFERASE"/>
    <property type="match status" value="1"/>
</dbReference>
<dbReference type="Pfam" id="PF01467">
    <property type="entry name" value="CTP_transf_like"/>
    <property type="match status" value="1"/>
</dbReference>
<dbReference type="PRINTS" id="PR01020">
    <property type="entry name" value="LPSBIOSNTHSS"/>
</dbReference>
<dbReference type="SUPFAM" id="SSF52374">
    <property type="entry name" value="Nucleotidylyl transferase"/>
    <property type="match status" value="1"/>
</dbReference>
<reference key="1">
    <citation type="journal article" date="2010" name="Genome Biol. Evol.">
        <title>Continuing evolution of Burkholderia mallei through genome reduction and large-scale rearrangements.</title>
        <authorList>
            <person name="Losada L."/>
            <person name="Ronning C.M."/>
            <person name="DeShazer D."/>
            <person name="Woods D."/>
            <person name="Fedorova N."/>
            <person name="Kim H.S."/>
            <person name="Shabalina S.A."/>
            <person name="Pearson T.R."/>
            <person name="Brinkac L."/>
            <person name="Tan P."/>
            <person name="Nandi T."/>
            <person name="Crabtree J."/>
            <person name="Badger J."/>
            <person name="Beckstrom-Sternberg S."/>
            <person name="Saqib M."/>
            <person name="Schutzer S.E."/>
            <person name="Keim P."/>
            <person name="Nierman W.C."/>
        </authorList>
    </citation>
    <scope>NUCLEOTIDE SEQUENCE [LARGE SCALE GENOMIC DNA]</scope>
    <source>
        <strain>1106a</strain>
    </source>
</reference>
<feature type="chain" id="PRO_1000011109" description="Phosphopantetheine adenylyltransferase">
    <location>
        <begin position="1"/>
        <end position="166"/>
    </location>
</feature>
<feature type="binding site" evidence="1">
    <location>
        <begin position="9"/>
        <end position="10"/>
    </location>
    <ligand>
        <name>ATP</name>
        <dbReference type="ChEBI" id="CHEBI:30616"/>
    </ligand>
</feature>
<feature type="binding site" evidence="1">
    <location>
        <position position="9"/>
    </location>
    <ligand>
        <name>substrate</name>
    </ligand>
</feature>
<feature type="binding site" evidence="1">
    <location>
        <position position="17"/>
    </location>
    <ligand>
        <name>ATP</name>
        <dbReference type="ChEBI" id="CHEBI:30616"/>
    </ligand>
</feature>
<feature type="binding site" evidence="1">
    <location>
        <position position="41"/>
    </location>
    <ligand>
        <name>substrate</name>
    </ligand>
</feature>
<feature type="binding site" evidence="1">
    <location>
        <position position="73"/>
    </location>
    <ligand>
        <name>substrate</name>
    </ligand>
</feature>
<feature type="binding site" evidence="1">
    <location>
        <position position="87"/>
    </location>
    <ligand>
        <name>substrate</name>
    </ligand>
</feature>
<feature type="binding site" evidence="1">
    <location>
        <begin position="88"/>
        <end position="90"/>
    </location>
    <ligand>
        <name>ATP</name>
        <dbReference type="ChEBI" id="CHEBI:30616"/>
    </ligand>
</feature>
<feature type="binding site" evidence="1">
    <location>
        <position position="98"/>
    </location>
    <ligand>
        <name>ATP</name>
        <dbReference type="ChEBI" id="CHEBI:30616"/>
    </ligand>
</feature>
<feature type="binding site" evidence="1">
    <location>
        <begin position="123"/>
        <end position="129"/>
    </location>
    <ligand>
        <name>ATP</name>
        <dbReference type="ChEBI" id="CHEBI:30616"/>
    </ligand>
</feature>
<feature type="site" description="Transition state stabilizer" evidence="1">
    <location>
        <position position="17"/>
    </location>
</feature>
<sequence length="166" mass="18530">MVVAVYPGTFDPLTRGHEDLVRRASSIFDTLVVGVADSRAKKPFFSLEERLKIANEVLGHYPNVKVMGFTGLLKDFVRANDARVIVRGLRAVSDFEYEFQMAGMNRYLLPDVETMFMTPSDQYQFISGTIVREIAQLGGDVSKFVFPSVEKWLTEKVAAMAQGPSA</sequence>